<protein>
    <recommendedName>
        <fullName evidence="1">Ubiquinone biosynthesis O-methyltransferase</fullName>
    </recommendedName>
    <alternativeName>
        <fullName evidence="1">2-polyprenyl-6-hydroxyphenol methylase</fullName>
        <ecNumber evidence="1">2.1.1.222</ecNumber>
    </alternativeName>
    <alternativeName>
        <fullName evidence="1">3-demethylubiquinone 3-O-methyltransferase</fullName>
        <ecNumber evidence="1">2.1.1.64</ecNumber>
    </alternativeName>
</protein>
<accession>Q3YZX6</accession>
<gene>
    <name evidence="1" type="primary">ubiG</name>
    <name type="ordered locus">SSON_2290</name>
</gene>
<organism>
    <name type="scientific">Shigella sonnei (strain Ss046)</name>
    <dbReference type="NCBI Taxonomy" id="300269"/>
    <lineage>
        <taxon>Bacteria</taxon>
        <taxon>Pseudomonadati</taxon>
        <taxon>Pseudomonadota</taxon>
        <taxon>Gammaproteobacteria</taxon>
        <taxon>Enterobacterales</taxon>
        <taxon>Enterobacteriaceae</taxon>
        <taxon>Shigella</taxon>
    </lineage>
</organism>
<sequence>MNAEKSPENHNVDHEEIAKFEAVASRWWDLEGEFKPLHRINPLRLGYIAERAGGLFGKKVLDVGCGGGILAESMAREGATVTGLDMGFEPLQVAKLHALESGIQVDYVQETVEEHAAKHAGQYDVVTCMEMLEHVPDPQSVVRACAQLVKPGGDVFFSTLNRNGKSWLMAVVGAEYILRMVPKGTHDVKKFIKPAELLGWVDQTSLKERHITGLHYNPITNSFKLGPGVDVNYMLHTQNK</sequence>
<comment type="function">
    <text evidence="1">O-methyltransferase that catalyzes the 2 O-methylation steps in the ubiquinone biosynthetic pathway.</text>
</comment>
<comment type="catalytic activity">
    <reaction evidence="1">
        <text>a 3-demethylubiquinol + S-adenosyl-L-methionine = a ubiquinol + S-adenosyl-L-homocysteine + H(+)</text>
        <dbReference type="Rhea" id="RHEA:44380"/>
        <dbReference type="Rhea" id="RHEA-COMP:9566"/>
        <dbReference type="Rhea" id="RHEA-COMP:10914"/>
        <dbReference type="ChEBI" id="CHEBI:15378"/>
        <dbReference type="ChEBI" id="CHEBI:17976"/>
        <dbReference type="ChEBI" id="CHEBI:57856"/>
        <dbReference type="ChEBI" id="CHEBI:59789"/>
        <dbReference type="ChEBI" id="CHEBI:84422"/>
        <dbReference type="EC" id="2.1.1.64"/>
    </reaction>
</comment>
<comment type="catalytic activity">
    <reaction evidence="1">
        <text>a 3-(all-trans-polyprenyl)benzene-1,2-diol + S-adenosyl-L-methionine = a 2-methoxy-6-(all-trans-polyprenyl)phenol + S-adenosyl-L-homocysteine + H(+)</text>
        <dbReference type="Rhea" id="RHEA:31411"/>
        <dbReference type="Rhea" id="RHEA-COMP:9550"/>
        <dbReference type="Rhea" id="RHEA-COMP:9551"/>
        <dbReference type="ChEBI" id="CHEBI:15378"/>
        <dbReference type="ChEBI" id="CHEBI:57856"/>
        <dbReference type="ChEBI" id="CHEBI:59789"/>
        <dbReference type="ChEBI" id="CHEBI:62729"/>
        <dbReference type="ChEBI" id="CHEBI:62731"/>
        <dbReference type="EC" id="2.1.1.222"/>
    </reaction>
</comment>
<comment type="pathway">
    <text evidence="1">Cofactor biosynthesis; ubiquinone biosynthesis.</text>
</comment>
<comment type="similarity">
    <text evidence="1">Belongs to the methyltransferase superfamily. UbiG/COQ3 family.</text>
</comment>
<feature type="chain" id="PRO_0000241738" description="Ubiquinone biosynthesis O-methyltransferase">
    <location>
        <begin position="1"/>
        <end position="240"/>
    </location>
</feature>
<feature type="binding site" evidence="1">
    <location>
        <position position="44"/>
    </location>
    <ligand>
        <name>S-adenosyl-L-methionine</name>
        <dbReference type="ChEBI" id="CHEBI:59789"/>
    </ligand>
</feature>
<feature type="binding site" evidence="1">
    <location>
        <position position="64"/>
    </location>
    <ligand>
        <name>S-adenosyl-L-methionine</name>
        <dbReference type="ChEBI" id="CHEBI:59789"/>
    </ligand>
</feature>
<feature type="binding site" evidence="1">
    <location>
        <position position="85"/>
    </location>
    <ligand>
        <name>S-adenosyl-L-methionine</name>
        <dbReference type="ChEBI" id="CHEBI:59789"/>
    </ligand>
</feature>
<feature type="binding site" evidence="1">
    <location>
        <position position="129"/>
    </location>
    <ligand>
        <name>S-adenosyl-L-methionine</name>
        <dbReference type="ChEBI" id="CHEBI:59789"/>
    </ligand>
</feature>
<name>UBIG_SHISS</name>
<dbReference type="EC" id="2.1.1.222" evidence="1"/>
<dbReference type="EC" id="2.1.1.64" evidence="1"/>
<dbReference type="EMBL" id="CP000038">
    <property type="protein sequence ID" value="AAZ88936.1"/>
    <property type="molecule type" value="Genomic_DNA"/>
</dbReference>
<dbReference type="RefSeq" id="WP_000990752.1">
    <property type="nucleotide sequence ID" value="NC_007384.1"/>
</dbReference>
<dbReference type="SMR" id="Q3YZX6"/>
<dbReference type="GeneID" id="93774945"/>
<dbReference type="KEGG" id="ssn:SSON_2290"/>
<dbReference type="HOGENOM" id="CLU_042432_5_0_6"/>
<dbReference type="UniPathway" id="UPA00232"/>
<dbReference type="Proteomes" id="UP000002529">
    <property type="component" value="Chromosome"/>
</dbReference>
<dbReference type="GO" id="GO:0102208">
    <property type="term" value="F:2-polyprenyl-6-hydroxyphenol methylase activity"/>
    <property type="evidence" value="ECO:0007669"/>
    <property type="project" value="UniProtKB-EC"/>
</dbReference>
<dbReference type="GO" id="GO:0061542">
    <property type="term" value="F:3-demethylubiquinol 3-O-methyltransferase activity"/>
    <property type="evidence" value="ECO:0007669"/>
    <property type="project" value="UniProtKB-UniRule"/>
</dbReference>
<dbReference type="GO" id="GO:0010420">
    <property type="term" value="F:polyprenyldihydroxybenzoate methyltransferase activity"/>
    <property type="evidence" value="ECO:0007669"/>
    <property type="project" value="InterPro"/>
</dbReference>
<dbReference type="GO" id="GO:0032259">
    <property type="term" value="P:methylation"/>
    <property type="evidence" value="ECO:0007669"/>
    <property type="project" value="UniProtKB-KW"/>
</dbReference>
<dbReference type="CDD" id="cd02440">
    <property type="entry name" value="AdoMet_MTases"/>
    <property type="match status" value="1"/>
</dbReference>
<dbReference type="FunFam" id="3.40.50.150:FF:000028">
    <property type="entry name" value="Ubiquinone biosynthesis O-methyltransferase"/>
    <property type="match status" value="1"/>
</dbReference>
<dbReference type="Gene3D" id="3.40.50.150">
    <property type="entry name" value="Vaccinia Virus protein VP39"/>
    <property type="match status" value="1"/>
</dbReference>
<dbReference type="HAMAP" id="MF_00472">
    <property type="entry name" value="UbiG"/>
    <property type="match status" value="1"/>
</dbReference>
<dbReference type="InterPro" id="IPR029063">
    <property type="entry name" value="SAM-dependent_MTases_sf"/>
</dbReference>
<dbReference type="InterPro" id="IPR010233">
    <property type="entry name" value="UbiG_MeTrfase"/>
</dbReference>
<dbReference type="NCBIfam" id="TIGR01983">
    <property type="entry name" value="UbiG"/>
    <property type="match status" value="1"/>
</dbReference>
<dbReference type="PANTHER" id="PTHR43464">
    <property type="entry name" value="METHYLTRANSFERASE"/>
    <property type="match status" value="1"/>
</dbReference>
<dbReference type="PANTHER" id="PTHR43464:SF19">
    <property type="entry name" value="UBIQUINONE BIOSYNTHESIS O-METHYLTRANSFERASE, MITOCHONDRIAL"/>
    <property type="match status" value="1"/>
</dbReference>
<dbReference type="Pfam" id="PF13489">
    <property type="entry name" value="Methyltransf_23"/>
    <property type="match status" value="1"/>
</dbReference>
<dbReference type="SUPFAM" id="SSF53335">
    <property type="entry name" value="S-adenosyl-L-methionine-dependent methyltransferases"/>
    <property type="match status" value="1"/>
</dbReference>
<reference key="1">
    <citation type="journal article" date="2005" name="Nucleic Acids Res.">
        <title>Genome dynamics and diversity of Shigella species, the etiologic agents of bacillary dysentery.</title>
        <authorList>
            <person name="Yang F."/>
            <person name="Yang J."/>
            <person name="Zhang X."/>
            <person name="Chen L."/>
            <person name="Jiang Y."/>
            <person name="Yan Y."/>
            <person name="Tang X."/>
            <person name="Wang J."/>
            <person name="Xiong Z."/>
            <person name="Dong J."/>
            <person name="Xue Y."/>
            <person name="Zhu Y."/>
            <person name="Xu X."/>
            <person name="Sun L."/>
            <person name="Chen S."/>
            <person name="Nie H."/>
            <person name="Peng J."/>
            <person name="Xu J."/>
            <person name="Wang Y."/>
            <person name="Yuan Z."/>
            <person name="Wen Y."/>
            <person name="Yao Z."/>
            <person name="Shen Y."/>
            <person name="Qiang B."/>
            <person name="Hou Y."/>
            <person name="Yu J."/>
            <person name="Jin Q."/>
        </authorList>
    </citation>
    <scope>NUCLEOTIDE SEQUENCE [LARGE SCALE GENOMIC DNA]</scope>
    <source>
        <strain>Ss046</strain>
    </source>
</reference>
<evidence type="ECO:0000255" key="1">
    <source>
        <dbReference type="HAMAP-Rule" id="MF_00472"/>
    </source>
</evidence>
<keyword id="KW-0489">Methyltransferase</keyword>
<keyword id="KW-1185">Reference proteome</keyword>
<keyword id="KW-0949">S-adenosyl-L-methionine</keyword>
<keyword id="KW-0808">Transferase</keyword>
<keyword id="KW-0831">Ubiquinone biosynthesis</keyword>
<proteinExistence type="inferred from homology"/>